<comment type="function">
    <text evidence="2">Catalyzes the transmethylation of nonepinephrine (noradrenaline) to form epinephrine (adrenaline), using S-adenosyl-L-methionine as the methyl donor (PubMed:13863458). Other substrates include phenylethanolamine, octopamine and normetanephrine (PubMed:13863458).</text>
</comment>
<comment type="catalytic activity">
    <reaction evidence="2">
        <text>phenylethanolamine + S-adenosyl-L-methionine = N-methylphenylethanolamine + S-adenosyl-L-homocysteine + H(+)</text>
        <dbReference type="Rhea" id="RHEA:12176"/>
        <dbReference type="ChEBI" id="CHEBI:15378"/>
        <dbReference type="ChEBI" id="CHEBI:57741"/>
        <dbReference type="ChEBI" id="CHEBI:57856"/>
        <dbReference type="ChEBI" id="CHEBI:57946"/>
        <dbReference type="ChEBI" id="CHEBI:59789"/>
        <dbReference type="EC" id="2.1.1.28"/>
    </reaction>
    <physiologicalReaction direction="left-to-right" evidence="4">
        <dbReference type="Rhea" id="RHEA:12177"/>
    </physiologicalReaction>
</comment>
<comment type="catalytic activity">
    <reaction evidence="2">
        <text>(R)-noradrenaline + S-adenosyl-L-methionine = (R)-adrenaline + S-adenosyl-L-homocysteine + H(+)</text>
        <dbReference type="Rhea" id="RHEA:25269"/>
        <dbReference type="ChEBI" id="CHEBI:15378"/>
        <dbReference type="ChEBI" id="CHEBI:57856"/>
        <dbReference type="ChEBI" id="CHEBI:59789"/>
        <dbReference type="ChEBI" id="CHEBI:71406"/>
        <dbReference type="ChEBI" id="CHEBI:72587"/>
        <dbReference type="EC" id="2.1.1.28"/>
    </reaction>
    <physiologicalReaction direction="left-to-right" evidence="4">
        <dbReference type="Rhea" id="RHEA:25270"/>
    </physiologicalReaction>
</comment>
<comment type="catalytic activity">
    <reaction evidence="2">
        <text>(R)-normetanephrine + S-adenosyl-L-methionine = (R)-metanephrine + S-adenosyl-L-homocysteine + H(+)</text>
        <dbReference type="Rhea" id="RHEA:70683"/>
        <dbReference type="ChEBI" id="CHEBI:15378"/>
        <dbReference type="ChEBI" id="CHEBI:57856"/>
        <dbReference type="ChEBI" id="CHEBI:59789"/>
        <dbReference type="ChEBI" id="CHEBI:189645"/>
        <dbReference type="ChEBI" id="CHEBI:189646"/>
    </reaction>
    <physiologicalReaction direction="left-to-right" evidence="4">
        <dbReference type="Rhea" id="RHEA:70684"/>
    </physiologicalReaction>
</comment>
<comment type="catalytic activity">
    <reaction evidence="2">
        <text>(R)-octopamine + S-adenosyl-L-methionine = (R)-synephrine + S-adenosyl-L-homocysteine + H(+)</text>
        <dbReference type="Rhea" id="RHEA:70519"/>
        <dbReference type="ChEBI" id="CHEBI:15378"/>
        <dbReference type="ChEBI" id="CHEBI:57856"/>
        <dbReference type="ChEBI" id="CHEBI:59789"/>
        <dbReference type="ChEBI" id="CHEBI:63694"/>
        <dbReference type="ChEBI" id="CHEBI:141486"/>
    </reaction>
    <physiologicalReaction direction="left-to-right" evidence="4">
        <dbReference type="Rhea" id="RHEA:70520"/>
    </physiologicalReaction>
</comment>
<comment type="activity regulation">
    <text evidence="2">Inhibited by p-chloromercuribenaoate.</text>
</comment>
<comment type="biophysicochemical properties">
    <kinetics>
        <KM evidence="2">5 uM for normetanephrine</KM>
    </kinetics>
    <phDependence>
        <text evidence="2">Optimum pH is 8-9.</text>
    </phDependence>
</comment>
<comment type="pathway">
    <text evidence="2">Catecholamine biosynthesis; (R)-adrenaline biosynthesis; (R)-adrenaline from (R)-noradrenaline: step 1/1.</text>
</comment>
<comment type="tissue specificity">
    <text evidence="2">Expressed in the adrenal medulla.</text>
</comment>
<comment type="similarity">
    <text evidence="3">Belongs to the class I-like SAM-binding methyltransferase superfamily. NNMT/PNMT/TEMT family.</text>
</comment>
<accession>A0A5F8AH41</accession>
<proteinExistence type="evidence at protein level"/>
<protein>
    <recommendedName>
        <fullName>Phenylethanolamine N-methyltransferase</fullName>
        <shortName>PNMTase</shortName>
        <ecNumber evidence="2">2.1.1.28</ecNumber>
    </recommendedName>
    <alternativeName>
        <fullName>Noradrenaline N-methyltransferase</fullName>
    </alternativeName>
</protein>
<evidence type="ECO:0000250" key="1">
    <source>
        <dbReference type="UniProtKB" id="P11086"/>
    </source>
</evidence>
<evidence type="ECO:0000269" key="2">
    <source>
    </source>
</evidence>
<evidence type="ECO:0000305" key="3"/>
<evidence type="ECO:0000305" key="4">
    <source>
    </source>
</evidence>
<organism>
    <name type="scientific">Macaca mulatta</name>
    <name type="common">Rhesus macaque</name>
    <dbReference type="NCBI Taxonomy" id="9544"/>
    <lineage>
        <taxon>Eukaryota</taxon>
        <taxon>Metazoa</taxon>
        <taxon>Chordata</taxon>
        <taxon>Craniata</taxon>
        <taxon>Vertebrata</taxon>
        <taxon>Euteleostomi</taxon>
        <taxon>Mammalia</taxon>
        <taxon>Eutheria</taxon>
        <taxon>Euarchontoglires</taxon>
        <taxon>Primates</taxon>
        <taxon>Haplorrhini</taxon>
        <taxon>Catarrhini</taxon>
        <taxon>Cercopithecidae</taxon>
        <taxon>Cercopithecinae</taxon>
        <taxon>Macaca</taxon>
    </lineage>
</organism>
<keyword id="KW-0127">Catecholamine biosynthesis</keyword>
<keyword id="KW-0489">Methyltransferase</keyword>
<keyword id="KW-0597">Phosphoprotein</keyword>
<keyword id="KW-1185">Reference proteome</keyword>
<keyword id="KW-0949">S-adenosyl-L-methionine</keyword>
<keyword id="KW-0808">Transferase</keyword>
<name>PNMT_MACMU</name>
<gene>
    <name type="primary">PNMT</name>
</gene>
<sequence>MSGADRIPAAGAAPDSASGRAAVASAYQRFEPRAYLRNNYAPPRGDLCNPNGVGPWKLRCLAQTFATGEVSGRTLIDIGSGPTVYQLLSACSHFEDITMTDFLEVNRQELGRWLREEPGAFNWSMYSQYACLIEGKGESWQEKERQLRARVKRVLPIDVHQPQPLGTGSPAPLPADTLVSAFCLEAVSPDLASFQRALDHITTLLRPGGHLLLIGALEESWYLAGEARLMVVPVSEEEVREALVRSGYEVRDLRTYIMPAHLQTGVDDVKGIFFAWAQKVGL</sequence>
<feature type="initiator methionine" description="Removed" evidence="1">
    <location>
        <position position="1"/>
    </location>
</feature>
<feature type="chain" id="PRO_0000455563" description="Phenylethanolamine N-methyltransferase">
    <location>
        <begin position="2"/>
        <end position="282"/>
    </location>
</feature>
<feature type="binding site" evidence="1">
    <location>
        <position position="35"/>
    </location>
    <ligand>
        <name>S-adenosyl-L-methionine</name>
        <dbReference type="ChEBI" id="CHEBI:59789"/>
    </ligand>
</feature>
<feature type="binding site" evidence="1">
    <location>
        <position position="40"/>
    </location>
    <ligand>
        <name>S-adenosyl-L-methionine</name>
        <dbReference type="ChEBI" id="CHEBI:59789"/>
    </ligand>
</feature>
<feature type="binding site" evidence="1">
    <location>
        <begin position="79"/>
        <end position="80"/>
    </location>
    <ligand>
        <name>S-adenosyl-L-methionine</name>
        <dbReference type="ChEBI" id="CHEBI:59789"/>
    </ligand>
</feature>
<feature type="binding site" evidence="1">
    <location>
        <position position="85"/>
    </location>
    <ligand>
        <name>S-adenosyl-L-methionine</name>
        <dbReference type="ChEBI" id="CHEBI:59789"/>
    </ligand>
</feature>
<feature type="binding site" evidence="1">
    <location>
        <position position="101"/>
    </location>
    <ligand>
        <name>S-adenosyl-L-methionine</name>
        <dbReference type="ChEBI" id="CHEBI:59789"/>
    </ligand>
</feature>
<feature type="binding site" evidence="1">
    <location>
        <position position="106"/>
    </location>
    <ligand>
        <name>S-adenosyl-L-methionine</name>
        <dbReference type="ChEBI" id="CHEBI:59789"/>
    </ligand>
</feature>
<feature type="binding site" evidence="1">
    <location>
        <begin position="158"/>
        <end position="159"/>
    </location>
    <ligand>
        <name>S-adenosyl-L-methionine</name>
        <dbReference type="ChEBI" id="CHEBI:59789"/>
    </ligand>
</feature>
<feature type="binding site" evidence="1">
    <location>
        <position position="181"/>
    </location>
    <ligand>
        <name>S-adenosyl-L-methionine</name>
        <dbReference type="ChEBI" id="CHEBI:59789"/>
    </ligand>
</feature>
<feature type="binding site" evidence="1">
    <location>
        <position position="219"/>
    </location>
    <ligand>
        <name>octopamine</name>
        <dbReference type="ChEBI" id="CHEBI:58025"/>
    </ligand>
</feature>
<feature type="binding site" evidence="1">
    <location>
        <position position="267"/>
    </location>
    <ligand>
        <name>octopamine</name>
        <dbReference type="ChEBI" id="CHEBI:58025"/>
    </ligand>
</feature>
<reference key="1">
    <citation type="journal article" date="2007" name="Science">
        <title>Evolutionary and biomedical insights from the rhesus macaque genome.</title>
        <authorList>
            <person name="Gibbs R.A."/>
            <person name="Rogers J."/>
            <person name="Katze M.G."/>
            <person name="Bumgarner R."/>
            <person name="Weinstock G.M."/>
            <person name="Mardis E.R."/>
            <person name="Remington K.A."/>
            <person name="Strausberg R.L."/>
            <person name="Venter J.C."/>
            <person name="Wilson R.K."/>
            <person name="Batzer M.A."/>
            <person name="Bustamante C.D."/>
            <person name="Eichler E.E."/>
            <person name="Hahn M.W."/>
            <person name="Hardison R.C."/>
            <person name="Makova K.D."/>
            <person name="Miller W."/>
            <person name="Milosavljevic A."/>
            <person name="Palermo R.E."/>
            <person name="Siepel A."/>
            <person name="Sikela J.M."/>
            <person name="Attaway T."/>
            <person name="Bell S."/>
            <person name="Bernard K.E."/>
            <person name="Buhay C.J."/>
            <person name="Chandrabose M.N."/>
            <person name="Dao M."/>
            <person name="Davis C."/>
            <person name="Delehaunty K.D."/>
            <person name="Ding Y."/>
            <person name="Dinh H.H."/>
            <person name="Dugan-Rocha S."/>
            <person name="Fulton L.A."/>
            <person name="Gabisi R.A."/>
            <person name="Garner T.T."/>
            <person name="Godfrey J."/>
            <person name="Hawes A.C."/>
            <person name="Hernandez J."/>
            <person name="Hines S."/>
            <person name="Holder M."/>
            <person name="Hume J."/>
            <person name="Jhangiani S.N."/>
            <person name="Joshi V."/>
            <person name="Khan Z.M."/>
            <person name="Kirkness E.F."/>
            <person name="Cree A."/>
            <person name="Fowler R.G."/>
            <person name="Lee S."/>
            <person name="Lewis L.R."/>
            <person name="Li Z."/>
            <person name="Liu Y.-S."/>
            <person name="Moore S.M."/>
            <person name="Muzny D."/>
            <person name="Nazareth L.V."/>
            <person name="Ngo D.N."/>
            <person name="Okwuonu G.O."/>
            <person name="Pai G."/>
            <person name="Parker D."/>
            <person name="Paul H.A."/>
            <person name="Pfannkoch C."/>
            <person name="Pohl C.S."/>
            <person name="Rogers Y.-H.C."/>
            <person name="Ruiz S.J."/>
            <person name="Sabo A."/>
            <person name="Santibanez J."/>
            <person name="Schneider B.W."/>
            <person name="Smith S.M."/>
            <person name="Sodergren E."/>
            <person name="Svatek A.F."/>
            <person name="Utterback T.R."/>
            <person name="Vattathil S."/>
            <person name="Warren W."/>
            <person name="White C.S."/>
            <person name="Chinwalla A.T."/>
            <person name="Feng Y."/>
            <person name="Halpern A.L."/>
            <person name="Hillier L.W."/>
            <person name="Huang X."/>
            <person name="Minx P."/>
            <person name="Nelson J.O."/>
            <person name="Pepin K.H."/>
            <person name="Qin X."/>
            <person name="Sutton G.G."/>
            <person name="Venter E."/>
            <person name="Walenz B.P."/>
            <person name="Wallis J.W."/>
            <person name="Worley K.C."/>
            <person name="Yang S.-P."/>
            <person name="Jones S.M."/>
            <person name="Marra M.A."/>
            <person name="Rocchi M."/>
            <person name="Schein J.E."/>
            <person name="Baertsch R."/>
            <person name="Clarke L."/>
            <person name="Csuros M."/>
            <person name="Glasscock J."/>
            <person name="Harris R.A."/>
            <person name="Havlak P."/>
            <person name="Jackson A.R."/>
            <person name="Jiang H."/>
            <person name="Liu Y."/>
            <person name="Messina D.N."/>
            <person name="Shen Y."/>
            <person name="Song H.X.-Z."/>
            <person name="Wylie T."/>
            <person name="Zhang L."/>
            <person name="Birney E."/>
            <person name="Han K."/>
            <person name="Konkel M.K."/>
            <person name="Lee J."/>
            <person name="Smit A.F.A."/>
            <person name="Ullmer B."/>
            <person name="Wang H."/>
            <person name="Xing J."/>
            <person name="Burhans R."/>
            <person name="Cheng Z."/>
            <person name="Karro J.E."/>
            <person name="Ma J."/>
            <person name="Raney B."/>
            <person name="She X."/>
            <person name="Cox M.J."/>
            <person name="Demuth J.P."/>
            <person name="Dumas L.J."/>
            <person name="Han S.-G."/>
            <person name="Hopkins J."/>
            <person name="Karimpour-Fard A."/>
            <person name="Kim Y.H."/>
            <person name="Pollack J.R."/>
            <person name="Vinar T."/>
            <person name="Addo-Quaye C."/>
            <person name="Degenhardt J."/>
            <person name="Denby A."/>
            <person name="Hubisz M.J."/>
            <person name="Indap A."/>
            <person name="Kosiol C."/>
            <person name="Lahn B.T."/>
            <person name="Lawson H.A."/>
            <person name="Marklein A."/>
            <person name="Nielsen R."/>
            <person name="Vallender E.J."/>
            <person name="Clark A.G."/>
            <person name="Ferguson B."/>
            <person name="Hernandez R.D."/>
            <person name="Hirani K."/>
            <person name="Kehrer-Sawatzki H."/>
            <person name="Kolb J."/>
            <person name="Patil S."/>
            <person name="Pu L.-L."/>
            <person name="Ren Y."/>
            <person name="Smith D.G."/>
            <person name="Wheeler D.A."/>
            <person name="Schenck I."/>
            <person name="Ball E.V."/>
            <person name="Chen R."/>
            <person name="Cooper D.N."/>
            <person name="Giardine B."/>
            <person name="Hsu F."/>
            <person name="Kent W.J."/>
            <person name="Lesk A."/>
            <person name="Nelson D.L."/>
            <person name="O'brien W.E."/>
            <person name="Pruefer K."/>
            <person name="Stenson P.D."/>
            <person name="Wallace J.C."/>
            <person name="Ke H."/>
            <person name="Liu X.-M."/>
            <person name="Wang P."/>
            <person name="Xiang A.P."/>
            <person name="Yang F."/>
            <person name="Barber G.P."/>
            <person name="Haussler D."/>
            <person name="Karolchik D."/>
            <person name="Kern A.D."/>
            <person name="Kuhn R.M."/>
            <person name="Smith K.E."/>
            <person name="Zwieg A.S."/>
        </authorList>
    </citation>
    <scope>NUCLEOTIDE SEQUENCE [LARGE SCALE GENOMIC DNA]</scope>
    <source>
        <strain>17573</strain>
    </source>
</reference>
<reference key="2">
    <citation type="journal article" date="1962" name="J. Biol. Chem.">
        <title>Purification and properties of phenylethanolamine-N-methyl transferase.</title>
        <authorList>
            <person name="Axelrod J."/>
        </authorList>
    </citation>
    <scope>FUNCTION</scope>
    <scope>CATALYTIC ACTIVITY</scope>
    <scope>BIOPHYSICOCHEMICAL PROPERTIES</scope>
    <scope>ACTIVITY REGULATION</scope>
    <scope>TISSUE SPECIFICITY</scope>
    <scope>PATHWAY</scope>
</reference>
<dbReference type="EC" id="2.1.1.28" evidence="2"/>
<dbReference type="EMBL" id="JSUE03016792">
    <property type="status" value="NOT_ANNOTATED_CDS"/>
    <property type="molecule type" value="Genomic_DNA"/>
</dbReference>
<dbReference type="SMR" id="A0A5F8AH41"/>
<dbReference type="FunCoup" id="A0A5F8AH41">
    <property type="interactions" value="574"/>
</dbReference>
<dbReference type="STRING" id="9544.ENSMMUP00000077175"/>
<dbReference type="PaxDb" id="9544-ENSMMUP00000001796"/>
<dbReference type="Ensembl" id="ENSMMUT00000085753.1">
    <property type="protein sequence ID" value="ENSMMUP00000077175.1"/>
    <property type="gene ID" value="ENSMMUG00000062416.1"/>
</dbReference>
<dbReference type="VEuPathDB" id="HostDB:ENSMMUG00000062416"/>
<dbReference type="VGNC" id="VGNC:104642">
    <property type="gene designation" value="PNMT"/>
</dbReference>
<dbReference type="GeneTree" id="ENSGT00390000011708"/>
<dbReference type="InParanoid" id="A0A5F8AH41"/>
<dbReference type="OMA" id="NNYMPPR"/>
<dbReference type="UniPathway" id="UPA00749">
    <property type="reaction ID" value="UER00736"/>
</dbReference>
<dbReference type="Proteomes" id="UP000006718">
    <property type="component" value="Chromosome 16"/>
</dbReference>
<dbReference type="Bgee" id="ENSMMUG00000062416">
    <property type="expression patterns" value="Expressed in lung and 15 other cell types or tissues"/>
</dbReference>
<dbReference type="GO" id="GO:0005829">
    <property type="term" value="C:cytosol"/>
    <property type="evidence" value="ECO:0000318"/>
    <property type="project" value="GO_Central"/>
</dbReference>
<dbReference type="GO" id="GO:0004603">
    <property type="term" value="F:phenylethanolamine N-methyltransferase activity"/>
    <property type="evidence" value="ECO:0000314"/>
    <property type="project" value="UniProtKB"/>
</dbReference>
<dbReference type="GO" id="GO:0042418">
    <property type="term" value="P:epinephrine biosynthetic process"/>
    <property type="evidence" value="ECO:0007669"/>
    <property type="project" value="UniProtKB-UniPathway"/>
</dbReference>
<dbReference type="GO" id="GO:0032259">
    <property type="term" value="P:methylation"/>
    <property type="evidence" value="ECO:0007669"/>
    <property type="project" value="UniProtKB-KW"/>
</dbReference>
<dbReference type="CDD" id="cd02440">
    <property type="entry name" value="AdoMet_MTases"/>
    <property type="match status" value="1"/>
</dbReference>
<dbReference type="FunFam" id="3.40.50.150:FF:000065">
    <property type="entry name" value="Phenylethanolamine N-methyltransferase"/>
    <property type="match status" value="1"/>
</dbReference>
<dbReference type="Gene3D" id="3.40.50.150">
    <property type="entry name" value="Vaccinia Virus protein VP39"/>
    <property type="match status" value="1"/>
</dbReference>
<dbReference type="InterPro" id="IPR025820">
    <property type="entry name" value="NNMT/PNMT/TEMT_CS"/>
</dbReference>
<dbReference type="InterPro" id="IPR000940">
    <property type="entry name" value="NNMT_TEMT_trans"/>
</dbReference>
<dbReference type="InterPro" id="IPR053384">
    <property type="entry name" value="SAM-dep_methyltransferase"/>
</dbReference>
<dbReference type="InterPro" id="IPR029063">
    <property type="entry name" value="SAM-dependent_MTases_sf"/>
</dbReference>
<dbReference type="NCBIfam" id="NF041360">
    <property type="entry name" value="GntF_guanitoxin"/>
    <property type="match status" value="1"/>
</dbReference>
<dbReference type="PANTHER" id="PTHR10867">
    <property type="entry name" value="NNMT/PNMT/TEMT FAMILY MEMBER"/>
    <property type="match status" value="1"/>
</dbReference>
<dbReference type="PANTHER" id="PTHR10867:SF18">
    <property type="entry name" value="PHENYLETHANOLAMINE N-METHYLTRANSFERASE"/>
    <property type="match status" value="1"/>
</dbReference>
<dbReference type="Pfam" id="PF01234">
    <property type="entry name" value="NNMT_PNMT_TEMT"/>
    <property type="match status" value="1"/>
</dbReference>
<dbReference type="PIRSF" id="PIRSF000384">
    <property type="entry name" value="PNMTase"/>
    <property type="match status" value="1"/>
</dbReference>
<dbReference type="SUPFAM" id="SSF53335">
    <property type="entry name" value="S-adenosyl-L-methionine-dependent methyltransferases"/>
    <property type="match status" value="1"/>
</dbReference>
<dbReference type="PROSITE" id="PS01100">
    <property type="entry name" value="NNMT_PNMT_TEMT"/>
    <property type="match status" value="1"/>
</dbReference>
<dbReference type="PROSITE" id="PS51681">
    <property type="entry name" value="SAM_MT_NNMT_PNMT_TEMT"/>
    <property type="match status" value="1"/>
</dbReference>